<sequence length="179" mass="20670">MLRFKELYQQKIIENLQKKFSYKNKHEIPQIKKIVINMGVGEATADSKVINNAVNDLTLISGQKPVVTLARKSIATFKLRENMKIGCKVTLRKDRMYDFLERLVIVALPRVKEFRGFSYKSFDGKGNFTFGLKEQIVFPEINYDKIDTIRGMDITIVTSAKTDQESKFLLSGFNLPFYN</sequence>
<name>RL5_RICAE</name>
<comment type="function">
    <text evidence="1">This is one of the proteins that bind and probably mediate the attachment of the 5S RNA into the large ribosomal subunit, where it forms part of the central protuberance. In the 70S ribosome it contacts protein S13 of the 30S subunit (bridge B1b), connecting the 2 subunits; this bridge is implicated in subunit movement. Contacts the P site tRNA; the 5S rRNA and some of its associated proteins might help stabilize positioning of ribosome-bound tRNAs.</text>
</comment>
<comment type="subunit">
    <text evidence="1">Part of the 50S ribosomal subunit; part of the 5S rRNA/L5/L18/L25 subcomplex. Contacts the 5S rRNA and the P site tRNA. Forms a bridge to the 30S subunit in the 70S ribosome.</text>
</comment>
<comment type="similarity">
    <text evidence="1">Belongs to the universal ribosomal protein uL5 family.</text>
</comment>
<feature type="chain" id="PRO_1000214640" description="Large ribosomal subunit protein uL5">
    <location>
        <begin position="1"/>
        <end position="179"/>
    </location>
</feature>
<organism>
    <name type="scientific">Rickettsia africae (strain ESF-5)</name>
    <dbReference type="NCBI Taxonomy" id="347255"/>
    <lineage>
        <taxon>Bacteria</taxon>
        <taxon>Pseudomonadati</taxon>
        <taxon>Pseudomonadota</taxon>
        <taxon>Alphaproteobacteria</taxon>
        <taxon>Rickettsiales</taxon>
        <taxon>Rickettsiaceae</taxon>
        <taxon>Rickettsieae</taxon>
        <taxon>Rickettsia</taxon>
        <taxon>spotted fever group</taxon>
    </lineage>
</organism>
<dbReference type="EMBL" id="CP001612">
    <property type="protein sequence ID" value="ACP53755.1"/>
    <property type="molecule type" value="Genomic_DNA"/>
</dbReference>
<dbReference type="RefSeq" id="WP_010977582.1">
    <property type="nucleotide sequence ID" value="NC_012633.1"/>
</dbReference>
<dbReference type="SMR" id="C3PP95"/>
<dbReference type="GeneID" id="928140"/>
<dbReference type="KEGG" id="raf:RAF_ORF0900"/>
<dbReference type="HOGENOM" id="CLU_061015_2_1_5"/>
<dbReference type="Proteomes" id="UP000002305">
    <property type="component" value="Chromosome"/>
</dbReference>
<dbReference type="GO" id="GO:1990904">
    <property type="term" value="C:ribonucleoprotein complex"/>
    <property type="evidence" value="ECO:0007669"/>
    <property type="project" value="UniProtKB-KW"/>
</dbReference>
<dbReference type="GO" id="GO:0005840">
    <property type="term" value="C:ribosome"/>
    <property type="evidence" value="ECO:0007669"/>
    <property type="project" value="UniProtKB-KW"/>
</dbReference>
<dbReference type="GO" id="GO:0019843">
    <property type="term" value="F:rRNA binding"/>
    <property type="evidence" value="ECO:0007669"/>
    <property type="project" value="UniProtKB-UniRule"/>
</dbReference>
<dbReference type="GO" id="GO:0003735">
    <property type="term" value="F:structural constituent of ribosome"/>
    <property type="evidence" value="ECO:0007669"/>
    <property type="project" value="InterPro"/>
</dbReference>
<dbReference type="GO" id="GO:0000049">
    <property type="term" value="F:tRNA binding"/>
    <property type="evidence" value="ECO:0007669"/>
    <property type="project" value="UniProtKB-UniRule"/>
</dbReference>
<dbReference type="GO" id="GO:0006412">
    <property type="term" value="P:translation"/>
    <property type="evidence" value="ECO:0007669"/>
    <property type="project" value="UniProtKB-UniRule"/>
</dbReference>
<dbReference type="FunFam" id="3.30.1440.10:FF:000001">
    <property type="entry name" value="50S ribosomal protein L5"/>
    <property type="match status" value="1"/>
</dbReference>
<dbReference type="Gene3D" id="3.30.1440.10">
    <property type="match status" value="1"/>
</dbReference>
<dbReference type="HAMAP" id="MF_01333_B">
    <property type="entry name" value="Ribosomal_uL5_B"/>
    <property type="match status" value="1"/>
</dbReference>
<dbReference type="InterPro" id="IPR002132">
    <property type="entry name" value="Ribosomal_uL5"/>
</dbReference>
<dbReference type="InterPro" id="IPR020930">
    <property type="entry name" value="Ribosomal_uL5_bac-type"/>
</dbReference>
<dbReference type="InterPro" id="IPR031309">
    <property type="entry name" value="Ribosomal_uL5_C"/>
</dbReference>
<dbReference type="InterPro" id="IPR020929">
    <property type="entry name" value="Ribosomal_uL5_CS"/>
</dbReference>
<dbReference type="InterPro" id="IPR022803">
    <property type="entry name" value="Ribosomal_uL5_dom_sf"/>
</dbReference>
<dbReference type="InterPro" id="IPR031310">
    <property type="entry name" value="Ribosomal_uL5_N"/>
</dbReference>
<dbReference type="NCBIfam" id="NF000585">
    <property type="entry name" value="PRK00010.1"/>
    <property type="match status" value="1"/>
</dbReference>
<dbReference type="PANTHER" id="PTHR11994">
    <property type="entry name" value="60S RIBOSOMAL PROTEIN L11-RELATED"/>
    <property type="match status" value="1"/>
</dbReference>
<dbReference type="Pfam" id="PF00281">
    <property type="entry name" value="Ribosomal_L5"/>
    <property type="match status" value="1"/>
</dbReference>
<dbReference type="Pfam" id="PF00673">
    <property type="entry name" value="Ribosomal_L5_C"/>
    <property type="match status" value="1"/>
</dbReference>
<dbReference type="PIRSF" id="PIRSF002161">
    <property type="entry name" value="Ribosomal_L5"/>
    <property type="match status" value="1"/>
</dbReference>
<dbReference type="SUPFAM" id="SSF55282">
    <property type="entry name" value="RL5-like"/>
    <property type="match status" value="1"/>
</dbReference>
<dbReference type="PROSITE" id="PS00358">
    <property type="entry name" value="RIBOSOMAL_L5"/>
    <property type="match status" value="1"/>
</dbReference>
<evidence type="ECO:0000255" key="1">
    <source>
        <dbReference type="HAMAP-Rule" id="MF_01333"/>
    </source>
</evidence>
<evidence type="ECO:0000305" key="2"/>
<gene>
    <name evidence="1" type="primary">rplE</name>
    <name type="ordered locus">RAF_ORF0900</name>
</gene>
<accession>C3PP95</accession>
<protein>
    <recommendedName>
        <fullName evidence="1">Large ribosomal subunit protein uL5</fullName>
    </recommendedName>
    <alternativeName>
        <fullName evidence="2">50S ribosomal protein L5</fullName>
    </alternativeName>
</protein>
<reference key="1">
    <citation type="journal article" date="2009" name="BMC Genomics">
        <title>Analysis of the Rickettsia africae genome reveals that virulence acquisition in Rickettsia species may be explained by genome reduction.</title>
        <authorList>
            <person name="Fournier P.-E."/>
            <person name="El Karkouri K."/>
            <person name="Leroy Q."/>
            <person name="Robert C."/>
            <person name="Giumelli B."/>
            <person name="Renesto P."/>
            <person name="Socolovschi C."/>
            <person name="Parola P."/>
            <person name="Audic S."/>
            <person name="Raoult D."/>
        </authorList>
    </citation>
    <scope>NUCLEOTIDE SEQUENCE [LARGE SCALE GENOMIC DNA]</scope>
    <source>
        <strain>ESF-5</strain>
    </source>
</reference>
<proteinExistence type="inferred from homology"/>
<keyword id="KW-0687">Ribonucleoprotein</keyword>
<keyword id="KW-0689">Ribosomal protein</keyword>
<keyword id="KW-0694">RNA-binding</keyword>
<keyword id="KW-0699">rRNA-binding</keyword>
<keyword id="KW-0820">tRNA-binding</keyword>